<proteinExistence type="inferred from homology"/>
<reference key="1">
    <citation type="journal article" date="2004" name="Proc. Natl. Acad. Sci. U.S.A.">
        <title>The louse-borne human pathogen Bartonella quintana is a genomic derivative of the zoonotic agent Bartonella henselae.</title>
        <authorList>
            <person name="Alsmark U.C.M."/>
            <person name="Frank A.C."/>
            <person name="Karlberg E.O."/>
            <person name="Legault B.-A."/>
            <person name="Ardell D.H."/>
            <person name="Canbaeck B."/>
            <person name="Eriksson A.-S."/>
            <person name="Naeslund A.K."/>
            <person name="Handley S.A."/>
            <person name="Huvet M."/>
            <person name="La Scola B."/>
            <person name="Holmberg M."/>
            <person name="Andersson S.G.E."/>
        </authorList>
    </citation>
    <scope>NUCLEOTIDE SEQUENCE [LARGE SCALE GENOMIC DNA]</scope>
    <source>
        <strain>ATCC 49882 / DSM 28221 / CCUG 30454 / Houston 1</strain>
    </source>
</reference>
<accession>Q6G5G6</accession>
<dbReference type="EC" id="4.1.1.65" evidence="1"/>
<dbReference type="EMBL" id="BX897699">
    <property type="protein sequence ID" value="CAF27329.1"/>
    <property type="molecule type" value="Genomic_DNA"/>
</dbReference>
<dbReference type="RefSeq" id="WP_011180452.1">
    <property type="nucleotide sequence ID" value="NZ_LRIJ02000001.1"/>
</dbReference>
<dbReference type="PaxDb" id="283166-BH05210"/>
<dbReference type="EnsemblBacteria" id="CAF27329">
    <property type="protein sequence ID" value="CAF27329"/>
    <property type="gene ID" value="BH05210"/>
</dbReference>
<dbReference type="KEGG" id="bhe:BH05210"/>
<dbReference type="eggNOG" id="COG0688">
    <property type="taxonomic scope" value="Bacteria"/>
</dbReference>
<dbReference type="OrthoDB" id="9790893at2"/>
<dbReference type="UniPathway" id="UPA00558">
    <property type="reaction ID" value="UER00616"/>
</dbReference>
<dbReference type="Proteomes" id="UP000000421">
    <property type="component" value="Chromosome"/>
</dbReference>
<dbReference type="GO" id="GO:0005886">
    <property type="term" value="C:plasma membrane"/>
    <property type="evidence" value="ECO:0007669"/>
    <property type="project" value="UniProtKB-SubCell"/>
</dbReference>
<dbReference type="GO" id="GO:0004609">
    <property type="term" value="F:phosphatidylserine decarboxylase activity"/>
    <property type="evidence" value="ECO:0007669"/>
    <property type="project" value="UniProtKB-UniRule"/>
</dbReference>
<dbReference type="GO" id="GO:0006646">
    <property type="term" value="P:phosphatidylethanolamine biosynthetic process"/>
    <property type="evidence" value="ECO:0007669"/>
    <property type="project" value="UniProtKB-UniRule"/>
</dbReference>
<dbReference type="HAMAP" id="MF_00664">
    <property type="entry name" value="PS_decarb_PSD_A"/>
    <property type="match status" value="1"/>
</dbReference>
<dbReference type="InterPro" id="IPR003817">
    <property type="entry name" value="PS_Dcarbxylase"/>
</dbReference>
<dbReference type="InterPro" id="IPR033175">
    <property type="entry name" value="PSD-A"/>
</dbReference>
<dbReference type="NCBIfam" id="NF003677">
    <property type="entry name" value="PRK05305.1-1"/>
    <property type="match status" value="1"/>
</dbReference>
<dbReference type="NCBIfam" id="NF003678">
    <property type="entry name" value="PRK05305.1-2"/>
    <property type="match status" value="1"/>
</dbReference>
<dbReference type="NCBIfam" id="NF003679">
    <property type="entry name" value="PRK05305.1-3"/>
    <property type="match status" value="1"/>
</dbReference>
<dbReference type="NCBIfam" id="NF003685">
    <property type="entry name" value="PRK05305.2-5"/>
    <property type="match status" value="1"/>
</dbReference>
<dbReference type="PANTHER" id="PTHR35809">
    <property type="entry name" value="ARCHAETIDYLSERINE DECARBOXYLASE PROENZYME-RELATED"/>
    <property type="match status" value="1"/>
</dbReference>
<dbReference type="PANTHER" id="PTHR35809:SF1">
    <property type="entry name" value="ARCHAETIDYLSERINE DECARBOXYLASE PROENZYME-RELATED"/>
    <property type="match status" value="1"/>
</dbReference>
<dbReference type="Pfam" id="PF02666">
    <property type="entry name" value="PS_Dcarbxylase"/>
    <property type="match status" value="1"/>
</dbReference>
<gene>
    <name evidence="1" type="primary">psd</name>
    <name type="synonym">psdA</name>
    <name type="ordered locus">BH05210</name>
</gene>
<feature type="chain" id="PRO_0000029753" description="Phosphatidylserine decarboxylase beta chain" evidence="1">
    <location>
        <begin position="1"/>
        <end position="189"/>
    </location>
</feature>
<feature type="chain" id="PRO_0000029754" description="Phosphatidylserine decarboxylase alpha chain" evidence="1">
    <location>
        <begin position="190"/>
        <end position="232"/>
    </location>
</feature>
<feature type="active site" description="Schiff-base intermediate with substrate; via pyruvic acid" evidence="1">
    <location>
        <position position="190"/>
    </location>
</feature>
<feature type="site" description="Cleavage (non-hydrolytic); by autocatalysis" evidence="1">
    <location>
        <begin position="189"/>
        <end position="190"/>
    </location>
</feature>
<feature type="modified residue" description="Pyruvic acid (Ser); by autocatalysis" evidence="1">
    <location>
        <position position="190"/>
    </location>
</feature>
<evidence type="ECO:0000255" key="1">
    <source>
        <dbReference type="HAMAP-Rule" id="MF_00664"/>
    </source>
</evidence>
<comment type="function">
    <text evidence="1">Catalyzes the formation of phosphatidylethanolamine (PtdEtn) from phosphatidylserine (PtdSer).</text>
</comment>
<comment type="catalytic activity">
    <reaction evidence="1">
        <text>a 1,2-diacyl-sn-glycero-3-phospho-L-serine + H(+) = a 1,2-diacyl-sn-glycero-3-phosphoethanolamine + CO2</text>
        <dbReference type="Rhea" id="RHEA:20828"/>
        <dbReference type="ChEBI" id="CHEBI:15378"/>
        <dbReference type="ChEBI" id="CHEBI:16526"/>
        <dbReference type="ChEBI" id="CHEBI:57262"/>
        <dbReference type="ChEBI" id="CHEBI:64612"/>
        <dbReference type="EC" id="4.1.1.65"/>
    </reaction>
</comment>
<comment type="cofactor">
    <cofactor evidence="1">
        <name>pyruvate</name>
        <dbReference type="ChEBI" id="CHEBI:15361"/>
    </cofactor>
    <text evidence="1">Binds 1 pyruvoyl group covalently per subunit.</text>
</comment>
<comment type="pathway">
    <text evidence="1">Phospholipid metabolism; phosphatidylethanolamine biosynthesis; phosphatidylethanolamine from CDP-diacylglycerol: step 2/2.</text>
</comment>
<comment type="subunit">
    <text evidence="1">Heterodimer of a large membrane-associated beta subunit and a small pyruvoyl-containing alpha subunit.</text>
</comment>
<comment type="subcellular location">
    <subcellularLocation>
        <location evidence="1">Cell membrane</location>
        <topology evidence="1">Peripheral membrane protein</topology>
    </subcellularLocation>
</comment>
<comment type="PTM">
    <text evidence="1">Is synthesized initially as an inactive proenzyme. Formation of the active enzyme involves a self-maturation process in which the active site pyruvoyl group is generated from an internal serine residue via an autocatalytic post-translational modification. Two non-identical subunits are generated from the proenzyme in this reaction, and the pyruvate is formed at the N-terminus of the alpha chain, which is derived from the carboxyl end of the proenzyme. The post-translation cleavage follows an unusual pathway, termed non-hydrolytic serinolysis, in which the side chain hydroxyl group of the serine supplies its oxygen atom to form the C-terminus of the beta chain, while the remainder of the serine residue undergoes an oxidative deamination to produce ammonia and the pyruvoyl prosthetic group on the alpha chain.</text>
</comment>
<comment type="similarity">
    <text evidence="1">Belongs to the phosphatidylserine decarboxylase family. PSD-A subfamily.</text>
</comment>
<organism>
    <name type="scientific">Bartonella henselae (strain ATCC 49882 / DSM 28221 / CCUG 30454 / Houston 1)</name>
    <name type="common">Rochalimaea henselae</name>
    <dbReference type="NCBI Taxonomy" id="283166"/>
    <lineage>
        <taxon>Bacteria</taxon>
        <taxon>Pseudomonadati</taxon>
        <taxon>Pseudomonadota</taxon>
        <taxon>Alphaproteobacteria</taxon>
        <taxon>Hyphomicrobiales</taxon>
        <taxon>Bartonellaceae</taxon>
        <taxon>Bartonella</taxon>
    </lineage>
</organism>
<protein>
    <recommendedName>
        <fullName evidence="1">Phosphatidylserine decarboxylase proenzyme</fullName>
        <ecNumber evidence="1">4.1.1.65</ecNumber>
    </recommendedName>
    <component>
        <recommendedName>
            <fullName evidence="1">Phosphatidylserine decarboxylase alpha chain</fullName>
        </recommendedName>
    </component>
    <component>
        <recommendedName>
            <fullName evidence="1">Phosphatidylserine decarboxylase beta chain</fullName>
        </recommendedName>
    </component>
</protein>
<name>PSD_BARHE</name>
<sequence>MSILQSVHNSFAPIHKEGYPFIIAFFVISLILGWVWSPLFWCGLVLTVWCIYFFRDPERVIPLNPNWIISPADGRISFVGPCIPPEELGLGNAEMIRISVFMDIFSCHINRVPISGKVESIIYHPGQFANAELDKASQFNERNGVVIDSKHGKIGVVQIAGAIARRIVCWSQEDDSVVTGQRFGLIRFGSRLDIYIPNEVKLRVTVGQTSIAGETVLGSFDDKSATTEFRFD</sequence>
<keyword id="KW-1003">Cell membrane</keyword>
<keyword id="KW-0210">Decarboxylase</keyword>
<keyword id="KW-0444">Lipid biosynthesis</keyword>
<keyword id="KW-0443">Lipid metabolism</keyword>
<keyword id="KW-0456">Lyase</keyword>
<keyword id="KW-0472">Membrane</keyword>
<keyword id="KW-0594">Phospholipid biosynthesis</keyword>
<keyword id="KW-1208">Phospholipid metabolism</keyword>
<keyword id="KW-0670">Pyruvate</keyword>
<keyword id="KW-0865">Zymogen</keyword>